<name>DNAB_MYCBO</name>
<dbReference type="EC" id="5.6.2.3" evidence="2"/>
<dbReference type="EC" id="3.1.-.-" evidence="3"/>
<dbReference type="EMBL" id="LT708304">
    <property type="protein sequence ID" value="SIT98432.1"/>
    <property type="molecule type" value="Genomic_DNA"/>
</dbReference>
<dbReference type="RefSeq" id="NP_853728.1">
    <property type="nucleotide sequence ID" value="NC_002945.3"/>
</dbReference>
<dbReference type="RefSeq" id="WP_003400547.1">
    <property type="nucleotide sequence ID" value="NC_002945.4"/>
</dbReference>
<dbReference type="SMR" id="P59966"/>
<dbReference type="KEGG" id="mbo:BQ2027_MB0059"/>
<dbReference type="PATRIC" id="fig|233413.5.peg.65"/>
<dbReference type="Proteomes" id="UP000001419">
    <property type="component" value="Chromosome"/>
</dbReference>
<dbReference type="GO" id="GO:0005829">
    <property type="term" value="C:cytosol"/>
    <property type="evidence" value="ECO:0007669"/>
    <property type="project" value="TreeGrafter"/>
</dbReference>
<dbReference type="GO" id="GO:1990077">
    <property type="term" value="C:primosome complex"/>
    <property type="evidence" value="ECO:0007669"/>
    <property type="project" value="UniProtKB-KW"/>
</dbReference>
<dbReference type="GO" id="GO:0005524">
    <property type="term" value="F:ATP binding"/>
    <property type="evidence" value="ECO:0007669"/>
    <property type="project" value="UniProtKB-KW"/>
</dbReference>
<dbReference type="GO" id="GO:0016887">
    <property type="term" value="F:ATP hydrolysis activity"/>
    <property type="evidence" value="ECO:0007669"/>
    <property type="project" value="InterPro"/>
</dbReference>
<dbReference type="GO" id="GO:0003677">
    <property type="term" value="F:DNA binding"/>
    <property type="evidence" value="ECO:0007669"/>
    <property type="project" value="UniProtKB-KW"/>
</dbReference>
<dbReference type="GO" id="GO:0003678">
    <property type="term" value="F:DNA helicase activity"/>
    <property type="evidence" value="ECO:0007669"/>
    <property type="project" value="InterPro"/>
</dbReference>
<dbReference type="GO" id="GO:0004519">
    <property type="term" value="F:endonuclease activity"/>
    <property type="evidence" value="ECO:0007669"/>
    <property type="project" value="UniProtKB-KW"/>
</dbReference>
<dbReference type="GO" id="GO:0006269">
    <property type="term" value="P:DNA replication, synthesis of primer"/>
    <property type="evidence" value="ECO:0007669"/>
    <property type="project" value="UniProtKB-KW"/>
</dbReference>
<dbReference type="GO" id="GO:0016539">
    <property type="term" value="P:intein-mediated protein splicing"/>
    <property type="evidence" value="ECO:0007669"/>
    <property type="project" value="InterPro"/>
</dbReference>
<dbReference type="GO" id="GO:0006314">
    <property type="term" value="P:intron homing"/>
    <property type="evidence" value="ECO:0007669"/>
    <property type="project" value="UniProtKB-KW"/>
</dbReference>
<dbReference type="CDD" id="cd00984">
    <property type="entry name" value="DnaB_C"/>
    <property type="match status" value="1"/>
</dbReference>
<dbReference type="CDD" id="cd00081">
    <property type="entry name" value="Hint"/>
    <property type="match status" value="2"/>
</dbReference>
<dbReference type="FunFam" id="1.10.860.10:FF:000001">
    <property type="entry name" value="Replicative DNA helicase"/>
    <property type="match status" value="1"/>
</dbReference>
<dbReference type="FunFam" id="3.40.50.300:FF:001469">
    <property type="entry name" value="Replicative DNA helicase"/>
    <property type="match status" value="1"/>
</dbReference>
<dbReference type="FunFam" id="3.40.50.300:FF:002029">
    <property type="entry name" value="Replicative DNA helicase"/>
    <property type="match status" value="1"/>
</dbReference>
<dbReference type="Gene3D" id="1.10.860.10">
    <property type="entry name" value="DNAb Helicase, Chain A"/>
    <property type="match status" value="1"/>
</dbReference>
<dbReference type="Gene3D" id="2.170.16.10">
    <property type="entry name" value="Hedgehog/Intein (Hint) domain"/>
    <property type="match status" value="2"/>
</dbReference>
<dbReference type="Gene3D" id="3.10.28.10">
    <property type="entry name" value="Homing endonucleases"/>
    <property type="match status" value="1"/>
</dbReference>
<dbReference type="Gene3D" id="3.40.50.300">
    <property type="entry name" value="P-loop containing nucleotide triphosphate hydrolases"/>
    <property type="match status" value="2"/>
</dbReference>
<dbReference type="InterPro" id="IPR003593">
    <property type="entry name" value="AAA+_ATPase"/>
</dbReference>
<dbReference type="InterPro" id="IPR036185">
    <property type="entry name" value="DNA_heli_DnaB-like_N_sf"/>
</dbReference>
<dbReference type="InterPro" id="IPR007692">
    <property type="entry name" value="DNA_helicase_DnaB"/>
</dbReference>
<dbReference type="InterPro" id="IPR007694">
    <property type="entry name" value="DNA_helicase_DnaB-like_C"/>
</dbReference>
<dbReference type="InterPro" id="IPR007693">
    <property type="entry name" value="DNA_helicase_DnaB-like_N"/>
</dbReference>
<dbReference type="InterPro" id="IPR016136">
    <property type="entry name" value="DNA_helicase_N/primase_C"/>
</dbReference>
<dbReference type="InterPro" id="IPR003586">
    <property type="entry name" value="Hint_dom_C"/>
</dbReference>
<dbReference type="InterPro" id="IPR003587">
    <property type="entry name" value="Hint_dom_N"/>
</dbReference>
<dbReference type="InterPro" id="IPR036844">
    <property type="entry name" value="Hint_dom_sf"/>
</dbReference>
<dbReference type="InterPro" id="IPR027434">
    <property type="entry name" value="Homing_endonucl"/>
</dbReference>
<dbReference type="InterPro" id="IPR006142">
    <property type="entry name" value="INTEIN"/>
</dbReference>
<dbReference type="InterPro" id="IPR030934">
    <property type="entry name" value="Intein_C"/>
</dbReference>
<dbReference type="InterPro" id="IPR004042">
    <property type="entry name" value="Intein_endonuc_central"/>
</dbReference>
<dbReference type="InterPro" id="IPR006141">
    <property type="entry name" value="Intein_N"/>
</dbReference>
<dbReference type="InterPro" id="IPR004860">
    <property type="entry name" value="LAGLIDADG_dom"/>
</dbReference>
<dbReference type="InterPro" id="IPR027417">
    <property type="entry name" value="P-loop_NTPase"/>
</dbReference>
<dbReference type="NCBIfam" id="TIGR00665">
    <property type="entry name" value="DnaB"/>
    <property type="match status" value="1"/>
</dbReference>
<dbReference type="NCBIfam" id="TIGR01443">
    <property type="entry name" value="intein_Cterm"/>
    <property type="match status" value="1"/>
</dbReference>
<dbReference type="NCBIfam" id="TIGR01445">
    <property type="entry name" value="intein_Nterm"/>
    <property type="match status" value="1"/>
</dbReference>
<dbReference type="NCBIfam" id="NF005852">
    <property type="entry name" value="PRK07773.1"/>
    <property type="match status" value="1"/>
</dbReference>
<dbReference type="PANTHER" id="PTHR30153:SF2">
    <property type="entry name" value="REPLICATIVE DNA HELICASE"/>
    <property type="match status" value="1"/>
</dbReference>
<dbReference type="PANTHER" id="PTHR30153">
    <property type="entry name" value="REPLICATIVE DNA HELICASE DNAB"/>
    <property type="match status" value="1"/>
</dbReference>
<dbReference type="Pfam" id="PF00772">
    <property type="entry name" value="DnaB"/>
    <property type="match status" value="1"/>
</dbReference>
<dbReference type="Pfam" id="PF03796">
    <property type="entry name" value="DnaB_C"/>
    <property type="match status" value="2"/>
</dbReference>
<dbReference type="Pfam" id="PF14890">
    <property type="entry name" value="Intein_splicing"/>
    <property type="match status" value="1"/>
</dbReference>
<dbReference type="Pfam" id="PF14528">
    <property type="entry name" value="LAGLIDADG_3"/>
    <property type="match status" value="1"/>
</dbReference>
<dbReference type="PRINTS" id="PR00379">
    <property type="entry name" value="INTEIN"/>
</dbReference>
<dbReference type="SMART" id="SM00382">
    <property type="entry name" value="AAA"/>
    <property type="match status" value="1"/>
</dbReference>
<dbReference type="SMART" id="SM00305">
    <property type="entry name" value="HintC"/>
    <property type="match status" value="1"/>
</dbReference>
<dbReference type="SMART" id="SM00306">
    <property type="entry name" value="HintN"/>
    <property type="match status" value="1"/>
</dbReference>
<dbReference type="SUPFAM" id="SSF51294">
    <property type="entry name" value="Hedgehog/intein (Hint) domain"/>
    <property type="match status" value="1"/>
</dbReference>
<dbReference type="SUPFAM" id="SSF55608">
    <property type="entry name" value="Homing endonucleases"/>
    <property type="match status" value="1"/>
</dbReference>
<dbReference type="SUPFAM" id="SSF48024">
    <property type="entry name" value="N-terminal domain of DnaB helicase"/>
    <property type="match status" value="1"/>
</dbReference>
<dbReference type="SUPFAM" id="SSF52540">
    <property type="entry name" value="P-loop containing nucleoside triphosphate hydrolases"/>
    <property type="match status" value="1"/>
</dbReference>
<dbReference type="PROSITE" id="PS50818">
    <property type="entry name" value="INTEIN_C_TER"/>
    <property type="match status" value="1"/>
</dbReference>
<dbReference type="PROSITE" id="PS50819">
    <property type="entry name" value="INTEIN_ENDONUCLEASE"/>
    <property type="match status" value="1"/>
</dbReference>
<dbReference type="PROSITE" id="PS50817">
    <property type="entry name" value="INTEIN_N_TER"/>
    <property type="match status" value="1"/>
</dbReference>
<dbReference type="PROSITE" id="PS51199">
    <property type="entry name" value="SF4_HELICASE"/>
    <property type="match status" value="2"/>
</dbReference>
<gene>
    <name type="primary">dnaB</name>
    <name type="ordered locus">BQ2027_MB0059</name>
</gene>
<protein>
    <recommendedName>
        <fullName>Replicative DNA helicase DnaB</fullName>
        <ecNumber evidence="2">5.6.2.3</ecNumber>
    </recommendedName>
    <alternativeName>
        <fullName evidence="7">DNA 5'-3' helicase DnaB</fullName>
    </alternativeName>
    <component>
        <recommendedName>
            <fullName>Endonuclease PI-MboHIP</fullName>
            <ecNumber evidence="3">3.1.-.-</ecNumber>
        </recommendedName>
        <alternativeName>
            <fullName>Mbo DnaB intein</fullName>
        </alternativeName>
    </component>
</protein>
<accession>P59966</accession>
<accession>A0A1R3XVB4</accession>
<accession>X2BDX5</accession>
<keyword id="KW-0067">ATP-binding</keyword>
<keyword id="KW-0068">Autocatalytic cleavage</keyword>
<keyword id="KW-0235">DNA replication</keyword>
<keyword id="KW-0238">DNA-binding</keyword>
<keyword id="KW-0255">Endonuclease</keyword>
<keyword id="KW-0347">Helicase</keyword>
<keyword id="KW-0378">Hydrolase</keyword>
<keyword id="KW-0404">Intron homing</keyword>
<keyword id="KW-0413">Isomerase</keyword>
<keyword id="KW-0540">Nuclease</keyword>
<keyword id="KW-0547">Nucleotide-binding</keyword>
<keyword id="KW-0639">Primosome</keyword>
<keyword id="KW-0651">Protein splicing</keyword>
<keyword id="KW-1185">Reference proteome</keyword>
<keyword id="KW-0677">Repeat</keyword>
<evidence type="ECO:0000250" key="1"/>
<evidence type="ECO:0000250" key="2">
    <source>
        <dbReference type="UniProtKB" id="P9WMR3"/>
    </source>
</evidence>
<evidence type="ECO:0000250" key="3">
    <source>
        <dbReference type="UniProtKB" id="Q55418"/>
    </source>
</evidence>
<evidence type="ECO:0000255" key="4">
    <source>
        <dbReference type="PROSITE-ProRule" id="PRU00273"/>
    </source>
</evidence>
<evidence type="ECO:0000255" key="5">
    <source>
        <dbReference type="PROSITE-ProRule" id="PRU00596"/>
    </source>
</evidence>
<evidence type="ECO:0000256" key="6">
    <source>
        <dbReference type="SAM" id="MobiDB-lite"/>
    </source>
</evidence>
<evidence type="ECO:0000305" key="7"/>
<sequence length="874" mass="96818">MAVVDDLAPGMDSSPPSEDYGRQPPQDLAAEQSVLGGMLLSKDAIADVLERLRPGDFYRPAHQNVYDAILDLYGRGEPADAVTVAAELDRRGLLRRIGGAPYLHTLISTVPTAANAGYYASIVAEKALLRRLVEAGTRVVQYGYAGAEGADVAEVVDRAQAEIYDVADRRLSEDFVALEDLLQPTMDEIDAIASSGGLARGVATGFTELDEVTNGLHPGQMVIVAARPGVGKSTLGLDFMRSCSIRHRMASVIFSLEMSKSEIVMRLLSAEAKIKLSDMRSGRMSDDDWTRLARRMSEISEAPLFIDDSPNLTMMEIRAKARRLRQKANLKLIVVDYLQLMTSGKKYESRQVEVSEFSRHLKLLAKELEVPVVAISQLNRGPEQRTDKKPMLADLRESGCLTASTRILRADTGAEVAFGELMRSGERPMVWSLDERLRMVARPMINVFPSGRKEVFRLRLASGREVEATGSHPFMKFEGWTPLAQLKVGDRIAAPRRVPEPIDTQRMPESELISLARMIGDGSCLKNQPIRYEPVDEANLAAVTVSAAHSDGAAIRDDYLAARVPSLRPARQRLPRGRCTPIAAWLAGLGLFTKRSHEKCVPEAVFRAPNDQVALFLRHLWSAGGSVRWDPTNGQGRVYYGSTSRRLIDDVAQLLLRVGIFSWITHAPKLGGHDSWRLHIHGAKDQVRFLRHVGVHGAEAVAAQEMLRQLKGPVRNPNLDSAPKKVWAQVRNRLSAKQMMDIQLHEPTMWKHSPSRSRPHRAEARIEDRAIHELARGDAYWDTVVEITSIGDQHVFDGTVSGTHNFVANGISLHNSLEQDADVVILLHRPDAFDRDDPRGGEADFILAKHRNGPTKTVTVAHQLHLSRFANMAR</sequence>
<comment type="function">
    <text evidence="2">The main replicative DNA helicase, it participates in initiation and elongation during chromosome replication. Travels ahead of the DNA replisome, separating dsDNA into templates for DNA synthesis. A processive ATP-dependent 5'-3' DNA helicase it has DNA-dependent ATPase activity.</text>
</comment>
<comment type="function">
    <text evidence="3">The intein is an endonuclease.</text>
</comment>
<comment type="catalytic activity">
    <reaction evidence="2">
        <text>Couples ATP hydrolysis with the unwinding of duplex DNA at the replication fork by translocating in the 5'-3' direction. This creates two antiparallel DNA single strands (ssDNA). The leading ssDNA polymer is the template for DNA polymerase III holoenzyme which synthesizes a continuous strand.</text>
        <dbReference type="EC" id="5.6.2.3"/>
    </reaction>
</comment>
<comment type="catalytic activity">
    <reaction evidence="2">
        <text>ATP + H2O = ADP + phosphate + H(+)</text>
        <dbReference type="Rhea" id="RHEA:13065"/>
        <dbReference type="ChEBI" id="CHEBI:15377"/>
        <dbReference type="ChEBI" id="CHEBI:15378"/>
        <dbReference type="ChEBI" id="CHEBI:30616"/>
        <dbReference type="ChEBI" id="CHEBI:43474"/>
        <dbReference type="ChEBI" id="CHEBI:456216"/>
        <dbReference type="EC" id="5.6.2.3"/>
    </reaction>
</comment>
<comment type="subunit">
    <text evidence="2">Homohexamer.</text>
</comment>
<comment type="PTM">
    <text evidence="3">This protein undergoes a protein self splicing that involves a post-translational excision of the intervening region (intein) followed by peptide ligation.</text>
</comment>
<comment type="similarity">
    <text evidence="7">Belongs to the helicase family. DnaB subfamily.</text>
</comment>
<feature type="chain" id="PRO_0000013276" description="Replicative DNA helicase DnaB, 1st part" evidence="1">
    <location>
        <begin position="1"/>
        <end position="399"/>
    </location>
</feature>
<feature type="chain" id="PRO_0000013277" description="Endonuclease PI-MboHIP">
    <location>
        <begin position="400"/>
        <end position="815"/>
    </location>
</feature>
<feature type="chain" id="PRO_0000013278" description="Replicative DNA helicase DnaB, 2nd part" evidence="1">
    <location>
        <begin position="816"/>
        <end position="874"/>
    </location>
</feature>
<feature type="domain" description="SF4 helicase; first part" evidence="5">
    <location>
        <begin position="195"/>
        <end position="462"/>
    </location>
</feature>
<feature type="domain" description="DOD-type homing endonuclease" evidence="4">
    <location>
        <begin position="582"/>
        <end position="660"/>
    </location>
</feature>
<feature type="domain" description="SF4 helicase; second part" evidence="5">
    <location>
        <begin position="612"/>
        <end position="874"/>
    </location>
</feature>
<feature type="region of interest" description="Disordered" evidence="6">
    <location>
        <begin position="1"/>
        <end position="25"/>
    </location>
</feature>
<feature type="binding site" evidence="5">
    <location>
        <begin position="226"/>
        <end position="233"/>
    </location>
    <ligand>
        <name>ATP</name>
        <dbReference type="ChEBI" id="CHEBI:30616"/>
    </ligand>
</feature>
<proteinExistence type="inferred from homology"/>
<organism>
    <name type="scientific">Mycobacterium bovis (strain ATCC BAA-935 / AF2122/97)</name>
    <dbReference type="NCBI Taxonomy" id="233413"/>
    <lineage>
        <taxon>Bacteria</taxon>
        <taxon>Bacillati</taxon>
        <taxon>Actinomycetota</taxon>
        <taxon>Actinomycetes</taxon>
        <taxon>Mycobacteriales</taxon>
        <taxon>Mycobacteriaceae</taxon>
        <taxon>Mycobacterium</taxon>
        <taxon>Mycobacterium tuberculosis complex</taxon>
    </lineage>
</organism>
<reference key="1">
    <citation type="journal article" date="2003" name="Proc. Natl. Acad. Sci. U.S.A.">
        <title>The complete genome sequence of Mycobacterium bovis.</title>
        <authorList>
            <person name="Garnier T."/>
            <person name="Eiglmeier K."/>
            <person name="Camus J.-C."/>
            <person name="Medina N."/>
            <person name="Mansoor H."/>
            <person name="Pryor M."/>
            <person name="Duthoy S."/>
            <person name="Grondin S."/>
            <person name="Lacroix C."/>
            <person name="Monsempe C."/>
            <person name="Simon S."/>
            <person name="Harris B."/>
            <person name="Atkin R."/>
            <person name="Doggett J."/>
            <person name="Mayes R."/>
            <person name="Keating L."/>
            <person name="Wheeler P.R."/>
            <person name="Parkhill J."/>
            <person name="Barrell B.G."/>
            <person name="Cole S.T."/>
            <person name="Gordon S.V."/>
            <person name="Hewinson R.G."/>
        </authorList>
    </citation>
    <scope>NUCLEOTIDE SEQUENCE [LARGE SCALE GENOMIC DNA]</scope>
    <source>
        <strain>ATCC BAA-935 / AF2122/97</strain>
    </source>
</reference>
<reference key="2">
    <citation type="journal article" date="2017" name="Genome Announc.">
        <title>Updated reference genome sequence and annotation of Mycobacterium bovis AF2122/97.</title>
        <authorList>
            <person name="Malone K.M."/>
            <person name="Farrell D."/>
            <person name="Stuber T.P."/>
            <person name="Schubert O.T."/>
            <person name="Aebersold R."/>
            <person name="Robbe-Austerman S."/>
            <person name="Gordon S.V."/>
        </authorList>
    </citation>
    <scope>NUCLEOTIDE SEQUENCE [LARGE SCALE GENOMIC DNA]</scope>
    <scope>GENOME REANNOTATION</scope>
    <source>
        <strain>ATCC BAA-935 / AF2122/97</strain>
    </source>
</reference>